<dbReference type="EC" id="3.1.-.-" evidence="1"/>
<dbReference type="EMBL" id="CP000679">
    <property type="protein sequence ID" value="ABP67719.1"/>
    <property type="molecule type" value="Genomic_DNA"/>
</dbReference>
<dbReference type="RefSeq" id="WP_011917650.1">
    <property type="nucleotide sequence ID" value="NC_009437.1"/>
</dbReference>
<dbReference type="SMR" id="A4XLD4"/>
<dbReference type="STRING" id="351627.Csac_2136"/>
<dbReference type="KEGG" id="csc:Csac_2136"/>
<dbReference type="eggNOG" id="COG1418">
    <property type="taxonomic scope" value="Bacteria"/>
</dbReference>
<dbReference type="HOGENOM" id="CLU_028328_1_0_9"/>
<dbReference type="OrthoDB" id="9803205at2"/>
<dbReference type="Proteomes" id="UP000000256">
    <property type="component" value="Chromosome"/>
</dbReference>
<dbReference type="GO" id="GO:0005886">
    <property type="term" value="C:plasma membrane"/>
    <property type="evidence" value="ECO:0007669"/>
    <property type="project" value="UniProtKB-SubCell"/>
</dbReference>
<dbReference type="GO" id="GO:0003723">
    <property type="term" value="F:RNA binding"/>
    <property type="evidence" value="ECO:0007669"/>
    <property type="project" value="UniProtKB-UniRule"/>
</dbReference>
<dbReference type="GO" id="GO:0004521">
    <property type="term" value="F:RNA endonuclease activity"/>
    <property type="evidence" value="ECO:0007669"/>
    <property type="project" value="UniProtKB-UniRule"/>
</dbReference>
<dbReference type="GO" id="GO:0006402">
    <property type="term" value="P:mRNA catabolic process"/>
    <property type="evidence" value="ECO:0007669"/>
    <property type="project" value="UniProtKB-UniRule"/>
</dbReference>
<dbReference type="CDD" id="cd00077">
    <property type="entry name" value="HDc"/>
    <property type="match status" value="1"/>
</dbReference>
<dbReference type="CDD" id="cd22431">
    <property type="entry name" value="KH-I_RNaseY"/>
    <property type="match status" value="1"/>
</dbReference>
<dbReference type="FunFam" id="1.10.3210.10:FF:000022">
    <property type="entry name" value="Ribonuclease Y"/>
    <property type="match status" value="1"/>
</dbReference>
<dbReference type="FunFam" id="3.30.1370.10:FF:000006">
    <property type="entry name" value="Ribonuclease Y"/>
    <property type="match status" value="1"/>
</dbReference>
<dbReference type="Gene3D" id="1.10.3210.10">
    <property type="entry name" value="Hypothetical protein af1432"/>
    <property type="match status" value="1"/>
</dbReference>
<dbReference type="Gene3D" id="3.30.1370.10">
    <property type="entry name" value="K Homology domain, type 1"/>
    <property type="match status" value="1"/>
</dbReference>
<dbReference type="HAMAP" id="MF_00335">
    <property type="entry name" value="RNase_Y"/>
    <property type="match status" value="1"/>
</dbReference>
<dbReference type="InterPro" id="IPR003607">
    <property type="entry name" value="HD/PDEase_dom"/>
</dbReference>
<dbReference type="InterPro" id="IPR006674">
    <property type="entry name" value="HD_domain"/>
</dbReference>
<dbReference type="InterPro" id="IPR006675">
    <property type="entry name" value="HDIG_dom"/>
</dbReference>
<dbReference type="InterPro" id="IPR004087">
    <property type="entry name" value="KH_dom"/>
</dbReference>
<dbReference type="InterPro" id="IPR004088">
    <property type="entry name" value="KH_dom_type_1"/>
</dbReference>
<dbReference type="InterPro" id="IPR036612">
    <property type="entry name" value="KH_dom_type_1_sf"/>
</dbReference>
<dbReference type="InterPro" id="IPR017705">
    <property type="entry name" value="Ribonuclease_Y"/>
</dbReference>
<dbReference type="InterPro" id="IPR022711">
    <property type="entry name" value="RNase_Y_N"/>
</dbReference>
<dbReference type="NCBIfam" id="TIGR00277">
    <property type="entry name" value="HDIG"/>
    <property type="match status" value="1"/>
</dbReference>
<dbReference type="NCBIfam" id="TIGR03319">
    <property type="entry name" value="RNase_Y"/>
    <property type="match status" value="1"/>
</dbReference>
<dbReference type="PANTHER" id="PTHR12826">
    <property type="entry name" value="RIBONUCLEASE Y"/>
    <property type="match status" value="1"/>
</dbReference>
<dbReference type="PANTHER" id="PTHR12826:SF15">
    <property type="entry name" value="RIBONUCLEASE Y"/>
    <property type="match status" value="1"/>
</dbReference>
<dbReference type="Pfam" id="PF01966">
    <property type="entry name" value="HD"/>
    <property type="match status" value="1"/>
</dbReference>
<dbReference type="Pfam" id="PF00013">
    <property type="entry name" value="KH_1"/>
    <property type="match status" value="1"/>
</dbReference>
<dbReference type="Pfam" id="PF12072">
    <property type="entry name" value="RNase_Y_N"/>
    <property type="match status" value="1"/>
</dbReference>
<dbReference type="SMART" id="SM00471">
    <property type="entry name" value="HDc"/>
    <property type="match status" value="1"/>
</dbReference>
<dbReference type="SMART" id="SM00322">
    <property type="entry name" value="KH"/>
    <property type="match status" value="1"/>
</dbReference>
<dbReference type="SUPFAM" id="SSF54791">
    <property type="entry name" value="Eukaryotic type KH-domain (KH-domain type I)"/>
    <property type="match status" value="1"/>
</dbReference>
<dbReference type="SUPFAM" id="SSF109604">
    <property type="entry name" value="HD-domain/PDEase-like"/>
    <property type="match status" value="1"/>
</dbReference>
<dbReference type="PROSITE" id="PS51831">
    <property type="entry name" value="HD"/>
    <property type="match status" value="1"/>
</dbReference>
<dbReference type="PROSITE" id="PS50084">
    <property type="entry name" value="KH_TYPE_1"/>
    <property type="match status" value="1"/>
</dbReference>
<gene>
    <name evidence="1" type="primary">rny</name>
    <name type="ordered locus">Csac_2136</name>
</gene>
<keyword id="KW-1003">Cell membrane</keyword>
<keyword id="KW-0255">Endonuclease</keyword>
<keyword id="KW-0378">Hydrolase</keyword>
<keyword id="KW-0472">Membrane</keyword>
<keyword id="KW-0540">Nuclease</keyword>
<keyword id="KW-0694">RNA-binding</keyword>
<keyword id="KW-0812">Transmembrane</keyword>
<keyword id="KW-1133">Transmembrane helix</keyword>
<reference key="1">
    <citation type="submission" date="2007-04" db="EMBL/GenBank/DDBJ databases">
        <title>Genome sequence of the thermophilic hydrogen-producing bacterium Caldicellulosiruptor saccharolyticus DSM 8903.</title>
        <authorList>
            <person name="Copeland A."/>
            <person name="Lucas S."/>
            <person name="Lapidus A."/>
            <person name="Barry K."/>
            <person name="Detter J.C."/>
            <person name="Glavina del Rio T."/>
            <person name="Hammon N."/>
            <person name="Israni S."/>
            <person name="Dalin E."/>
            <person name="Tice H."/>
            <person name="Pitluck S."/>
            <person name="Kiss H."/>
            <person name="Brettin T."/>
            <person name="Bruce D."/>
            <person name="Han C."/>
            <person name="Schmutz J."/>
            <person name="Larimer F."/>
            <person name="Land M."/>
            <person name="Hauser L."/>
            <person name="Kyrpides N."/>
            <person name="Lykidis A."/>
            <person name="van de Werken H.J.G."/>
            <person name="Verhaart M.R.A."/>
            <person name="VanFossen A.L."/>
            <person name="Lewis D.L."/>
            <person name="Nichols J.D."/>
            <person name="Goorissen H.P."/>
            <person name="van Niel E.W.J."/>
            <person name="Stams F.J.M."/>
            <person name="Willquist K.U."/>
            <person name="Ward D.E."/>
            <person name="van der Oost J."/>
            <person name="Kelly R.M."/>
            <person name="Kengen S.M.W."/>
            <person name="Richardson P."/>
        </authorList>
    </citation>
    <scope>NUCLEOTIDE SEQUENCE [LARGE SCALE GENOMIC DNA]</scope>
    <source>
        <strain>ATCC 43494 / DSM 8903 / Tp8T 6331</strain>
    </source>
</reference>
<comment type="function">
    <text evidence="1">Endoribonuclease that initiates mRNA decay.</text>
</comment>
<comment type="subcellular location">
    <subcellularLocation>
        <location evidence="1">Cell membrane</location>
        <topology evidence="1">Single-pass membrane protein</topology>
    </subcellularLocation>
</comment>
<comment type="similarity">
    <text evidence="1">Belongs to the RNase Y family.</text>
</comment>
<feature type="chain" id="PRO_0000344831" description="Ribonuclease Y">
    <location>
        <begin position="1"/>
        <end position="521"/>
    </location>
</feature>
<feature type="transmembrane region" description="Helical" evidence="1">
    <location>
        <begin position="10"/>
        <end position="30"/>
    </location>
</feature>
<feature type="domain" description="KH" evidence="1">
    <location>
        <begin position="210"/>
        <end position="270"/>
    </location>
</feature>
<feature type="domain" description="HD" evidence="2">
    <location>
        <begin position="336"/>
        <end position="430"/>
    </location>
</feature>
<proteinExistence type="inferred from homology"/>
<accession>A4XLD4</accession>
<sequence>MQKISDTLKLIITAGVSIALAIVAFFLGYLYRKKIAEKTIKSAEQEAQRIVEEAKKQAEAYKKEATLLAKEEIHRARSEFDREVRERRAELQRFERRLIQKEEMLDKKMAAVEEKEEQLNQKIKDVQKLQEEIELLKQKQQEELQRISGLTQEEARQIILKSVEQDVKHDVALMIKELEQQAKEEADKKAREIIALAIQRYSSDYVAENTVSVVTLPNDEMKGRIIGREGRNIKTFETVTGIDLIIDDTPEAVILSGFDPIRREIAKLTLEKLILDGRIHPARIEEMYEKAKREVENKIREEGERVVFELGIHNLHPELIKLIGKLRYRTSYGQNVLAHSIEVANIAGIMAAELGLDQSIAKRAGLLHDIGKAVDHEVEGSHALIGYDLAKRYKETNPDVLEAIGGHHGEMETRSIYNVLIQAADSVSAARPGARRESLESYIKRLQKLEEIANSFDGVEKAYAIQAGREIRIMVKPDHVSDDDIVIMAREIVKRIESELDYPGQIKVNVIREVRAVEYAK</sequence>
<protein>
    <recommendedName>
        <fullName evidence="1">Ribonuclease Y</fullName>
        <shortName evidence="1">RNase Y</shortName>
        <ecNumber evidence="1">3.1.-.-</ecNumber>
    </recommendedName>
</protein>
<name>RNY_CALS8</name>
<organism>
    <name type="scientific">Caldicellulosiruptor saccharolyticus (strain ATCC 43494 / DSM 8903 / Tp8T 6331)</name>
    <dbReference type="NCBI Taxonomy" id="351627"/>
    <lineage>
        <taxon>Bacteria</taxon>
        <taxon>Bacillati</taxon>
        <taxon>Bacillota</taxon>
        <taxon>Bacillota incertae sedis</taxon>
        <taxon>Caldicellulosiruptorales</taxon>
        <taxon>Caldicellulosiruptoraceae</taxon>
        <taxon>Caldicellulosiruptor</taxon>
    </lineage>
</organism>
<evidence type="ECO:0000255" key="1">
    <source>
        <dbReference type="HAMAP-Rule" id="MF_00335"/>
    </source>
</evidence>
<evidence type="ECO:0000255" key="2">
    <source>
        <dbReference type="PROSITE-ProRule" id="PRU01175"/>
    </source>
</evidence>